<evidence type="ECO:0000255" key="1">
    <source>
        <dbReference type="HAMAP-Rule" id="MF_01151"/>
    </source>
</evidence>
<organism>
    <name type="scientific">Francisella tularensis subsp. mediasiatica (strain FSC147)</name>
    <dbReference type="NCBI Taxonomy" id="441952"/>
    <lineage>
        <taxon>Bacteria</taxon>
        <taxon>Pseudomonadati</taxon>
        <taxon>Pseudomonadota</taxon>
        <taxon>Gammaproteobacteria</taxon>
        <taxon>Thiotrichales</taxon>
        <taxon>Francisellaceae</taxon>
        <taxon>Francisella</taxon>
    </lineage>
</organism>
<comment type="function">
    <text evidence="1">Participates actively in the response to hyperosmotic and heat shock by preventing the aggregation of stress-denatured proteins, in association with DnaK and GrpE. It is the nucleotide exchange factor for DnaK and may function as a thermosensor. Unfolded proteins bind initially to DnaJ; upon interaction with the DnaJ-bound protein, DnaK hydrolyzes its bound ATP, resulting in the formation of a stable complex. GrpE releases ADP from DnaK; ATP binding to DnaK triggers the release of the substrate protein, thus completing the reaction cycle. Several rounds of ATP-dependent interactions between DnaJ, DnaK and GrpE are required for fully efficient folding.</text>
</comment>
<comment type="subunit">
    <text evidence="1">Homodimer.</text>
</comment>
<comment type="subcellular location">
    <subcellularLocation>
        <location evidence="1">Cytoplasm</location>
    </subcellularLocation>
</comment>
<comment type="similarity">
    <text evidence="1">Belongs to the GrpE family.</text>
</comment>
<dbReference type="EMBL" id="CP000915">
    <property type="protein sequence ID" value="ACD30967.1"/>
    <property type="molecule type" value="Genomic_DNA"/>
</dbReference>
<dbReference type="SMR" id="B2SGV9"/>
<dbReference type="KEGG" id="ftm:FTM_1062"/>
<dbReference type="HOGENOM" id="CLU_057217_6_0_6"/>
<dbReference type="GO" id="GO:0005829">
    <property type="term" value="C:cytosol"/>
    <property type="evidence" value="ECO:0007669"/>
    <property type="project" value="TreeGrafter"/>
</dbReference>
<dbReference type="GO" id="GO:0000774">
    <property type="term" value="F:adenyl-nucleotide exchange factor activity"/>
    <property type="evidence" value="ECO:0007669"/>
    <property type="project" value="InterPro"/>
</dbReference>
<dbReference type="GO" id="GO:0042803">
    <property type="term" value="F:protein homodimerization activity"/>
    <property type="evidence" value="ECO:0007669"/>
    <property type="project" value="InterPro"/>
</dbReference>
<dbReference type="GO" id="GO:0051087">
    <property type="term" value="F:protein-folding chaperone binding"/>
    <property type="evidence" value="ECO:0007669"/>
    <property type="project" value="InterPro"/>
</dbReference>
<dbReference type="GO" id="GO:0051082">
    <property type="term" value="F:unfolded protein binding"/>
    <property type="evidence" value="ECO:0007669"/>
    <property type="project" value="TreeGrafter"/>
</dbReference>
<dbReference type="GO" id="GO:0006457">
    <property type="term" value="P:protein folding"/>
    <property type="evidence" value="ECO:0007669"/>
    <property type="project" value="InterPro"/>
</dbReference>
<dbReference type="CDD" id="cd00446">
    <property type="entry name" value="GrpE"/>
    <property type="match status" value="1"/>
</dbReference>
<dbReference type="FunFam" id="2.30.22.10:FF:000001">
    <property type="entry name" value="Protein GrpE"/>
    <property type="match status" value="1"/>
</dbReference>
<dbReference type="Gene3D" id="3.90.20.20">
    <property type="match status" value="1"/>
</dbReference>
<dbReference type="Gene3D" id="2.30.22.10">
    <property type="entry name" value="Head domain of nucleotide exchange factor GrpE"/>
    <property type="match status" value="1"/>
</dbReference>
<dbReference type="HAMAP" id="MF_01151">
    <property type="entry name" value="GrpE"/>
    <property type="match status" value="1"/>
</dbReference>
<dbReference type="InterPro" id="IPR000740">
    <property type="entry name" value="GrpE"/>
</dbReference>
<dbReference type="InterPro" id="IPR013805">
    <property type="entry name" value="GrpE_coiled_coil"/>
</dbReference>
<dbReference type="InterPro" id="IPR009012">
    <property type="entry name" value="GrpE_head"/>
</dbReference>
<dbReference type="NCBIfam" id="NF010737">
    <property type="entry name" value="PRK14139.1"/>
    <property type="match status" value="1"/>
</dbReference>
<dbReference type="NCBIfam" id="NF010738">
    <property type="entry name" value="PRK14140.1"/>
    <property type="match status" value="1"/>
</dbReference>
<dbReference type="NCBIfam" id="NF010746">
    <property type="entry name" value="PRK14148.1"/>
    <property type="match status" value="1"/>
</dbReference>
<dbReference type="NCBIfam" id="NF010748">
    <property type="entry name" value="PRK14150.1"/>
    <property type="match status" value="1"/>
</dbReference>
<dbReference type="PANTHER" id="PTHR21237">
    <property type="entry name" value="GRPE PROTEIN"/>
    <property type="match status" value="1"/>
</dbReference>
<dbReference type="PANTHER" id="PTHR21237:SF23">
    <property type="entry name" value="GRPE PROTEIN HOMOLOG, MITOCHONDRIAL"/>
    <property type="match status" value="1"/>
</dbReference>
<dbReference type="Pfam" id="PF01025">
    <property type="entry name" value="GrpE"/>
    <property type="match status" value="1"/>
</dbReference>
<dbReference type="PRINTS" id="PR00773">
    <property type="entry name" value="GRPEPROTEIN"/>
</dbReference>
<dbReference type="SUPFAM" id="SSF58014">
    <property type="entry name" value="Coiled-coil domain of nucleotide exchange factor GrpE"/>
    <property type="match status" value="1"/>
</dbReference>
<dbReference type="SUPFAM" id="SSF51064">
    <property type="entry name" value="Head domain of nucleotide exchange factor GrpE"/>
    <property type="match status" value="1"/>
</dbReference>
<dbReference type="PROSITE" id="PS01071">
    <property type="entry name" value="GRPE"/>
    <property type="match status" value="1"/>
</dbReference>
<proteinExistence type="inferred from homology"/>
<keyword id="KW-0143">Chaperone</keyword>
<keyword id="KW-0963">Cytoplasm</keyword>
<keyword id="KW-0346">Stress response</keyword>
<name>GRPE_FRATM</name>
<accession>B2SGV9</accession>
<protein>
    <recommendedName>
        <fullName evidence="1">Protein GrpE</fullName>
    </recommendedName>
    <alternativeName>
        <fullName evidence="1">HSP-70 cofactor</fullName>
    </alternativeName>
</protein>
<gene>
    <name evidence="1" type="primary">grpE</name>
    <name type="ordered locus">FTM_1062</name>
</gene>
<feature type="chain" id="PRO_1000137570" description="Protein GrpE">
    <location>
        <begin position="1"/>
        <end position="195"/>
    </location>
</feature>
<sequence>MSKQEKSNVEDKSLDIETAVQVETAQESASGALEELSVEEQLERAKDTIKELEDSCDQFKDEALRAKAEMENIRKRAERDVSNARKFGIEKFAKELLPVIDSIGQALKHEVKHEEAIAMKEGIELTAKMLVDILKKNGVEELDPKGEKFDPNLHEAMAMIPNPEFEDNTIFDVFQKGYMLNGRIVRAAKVVIVKN</sequence>
<reference key="1">
    <citation type="journal article" date="2009" name="PLoS Pathog.">
        <title>Molecular evolutionary consequences of niche restriction in Francisella tularensis, a facultative intracellular pathogen.</title>
        <authorList>
            <person name="Larsson P."/>
            <person name="Elfsmark D."/>
            <person name="Svensson K."/>
            <person name="Wikstroem P."/>
            <person name="Forsman M."/>
            <person name="Brettin T."/>
            <person name="Keim P."/>
            <person name="Johansson A."/>
        </authorList>
    </citation>
    <scope>NUCLEOTIDE SEQUENCE [LARGE SCALE GENOMIC DNA]</scope>
    <source>
        <strain>FSC147</strain>
    </source>
</reference>